<gene>
    <name type="primary">CGI121</name>
    <name type="ordered locus">CNBC0450</name>
</gene>
<accession>P0CM65</accession>
<accession>Q55WU5</accession>
<accession>Q5KJF3</accession>
<evidence type="ECO:0000250" key="1"/>
<evidence type="ECO:0000256" key="2">
    <source>
        <dbReference type="SAM" id="MobiDB-lite"/>
    </source>
</evidence>
<evidence type="ECO:0000305" key="3"/>
<comment type="function">
    <text evidence="1">Component of the EKC/KEOPS complex that is required for the formation of a threonylcarbamoyl group on adenosine at position 37 (t(6)A37) in tRNAs that read codons beginning with adenine. The complex is probably involved in the transfer of the threonylcarbamoyl moiety of threonylcarbamoyl-AMP (TC-AMP) to the N6 group of A37. CGI121 acts as an allosteric effector that regulates the t(6)A activity of the complex. The EKC/KEOPS complex also promotes both telomere uncapping and telomere elongation. The complex is required for efficient recruitment of transcriptional coactivators. CGI121 is not required for tRNA modification (By similarity).</text>
</comment>
<comment type="subunit">
    <text evidence="1">Component of the EKC/KEOPS complex composed of at least BUD32, CGI121, GON7, KAE1 and PCC1; the whole complex dimerizes.</text>
</comment>
<comment type="subcellular location">
    <subcellularLocation>
        <location evidence="1">Nucleus</location>
    </subcellularLocation>
    <subcellularLocation>
        <location evidence="1">Chromosome</location>
        <location evidence="1">Telomere</location>
    </subcellularLocation>
</comment>
<comment type="similarity">
    <text evidence="3">Belongs to the CGI121/TPRKB family.</text>
</comment>
<organism>
    <name type="scientific">Cryptococcus neoformans var. neoformans serotype D (strain B-3501A)</name>
    <name type="common">Filobasidiella neoformans</name>
    <dbReference type="NCBI Taxonomy" id="283643"/>
    <lineage>
        <taxon>Eukaryota</taxon>
        <taxon>Fungi</taxon>
        <taxon>Dikarya</taxon>
        <taxon>Basidiomycota</taxon>
        <taxon>Agaricomycotina</taxon>
        <taxon>Tremellomycetes</taxon>
        <taxon>Tremellales</taxon>
        <taxon>Cryptococcaceae</taxon>
        <taxon>Cryptococcus</taxon>
        <taxon>Cryptococcus neoformans species complex</taxon>
    </lineage>
</organism>
<sequence>METYAYPAFPPEYSNIHIALFKNVTNAPQIRKRLIEASQMTGPEGDKAREEVDFGFVEANLLVSKEHLLIAILSTLLYAFPSTGPAPTDPPPLSDIADPDVSSLSLSSSSETRQPKTRSHNLHSELLLLLSPNNNITDSIRRHGVSDITTNLAVVKFGKRGDRVEEVYEAMKNVVEGELIGWEGISEGTDWARVDKIYKLNELNALKTADMVEKKRTAVISTVAIKNVI</sequence>
<reference key="1">
    <citation type="journal article" date="2005" name="Science">
        <title>The genome of the basidiomycetous yeast and human pathogen Cryptococcus neoformans.</title>
        <authorList>
            <person name="Loftus B.J."/>
            <person name="Fung E."/>
            <person name="Roncaglia P."/>
            <person name="Rowley D."/>
            <person name="Amedeo P."/>
            <person name="Bruno D."/>
            <person name="Vamathevan J."/>
            <person name="Miranda M."/>
            <person name="Anderson I.J."/>
            <person name="Fraser J.A."/>
            <person name="Allen J.E."/>
            <person name="Bosdet I.E."/>
            <person name="Brent M.R."/>
            <person name="Chiu R."/>
            <person name="Doering T.L."/>
            <person name="Donlin M.J."/>
            <person name="D'Souza C.A."/>
            <person name="Fox D.S."/>
            <person name="Grinberg V."/>
            <person name="Fu J."/>
            <person name="Fukushima M."/>
            <person name="Haas B.J."/>
            <person name="Huang J.C."/>
            <person name="Janbon G."/>
            <person name="Jones S.J.M."/>
            <person name="Koo H.L."/>
            <person name="Krzywinski M.I."/>
            <person name="Kwon-Chung K.J."/>
            <person name="Lengeler K.B."/>
            <person name="Maiti R."/>
            <person name="Marra M.A."/>
            <person name="Marra R.E."/>
            <person name="Mathewson C.A."/>
            <person name="Mitchell T.G."/>
            <person name="Pertea M."/>
            <person name="Riggs F.R."/>
            <person name="Salzberg S.L."/>
            <person name="Schein J.E."/>
            <person name="Shvartsbeyn A."/>
            <person name="Shin H."/>
            <person name="Shumway M."/>
            <person name="Specht C.A."/>
            <person name="Suh B.B."/>
            <person name="Tenney A."/>
            <person name="Utterback T.R."/>
            <person name="Wickes B.L."/>
            <person name="Wortman J.R."/>
            <person name="Wye N.H."/>
            <person name="Kronstad J.W."/>
            <person name="Lodge J.K."/>
            <person name="Heitman J."/>
            <person name="Davis R.W."/>
            <person name="Fraser C.M."/>
            <person name="Hyman R.W."/>
        </authorList>
    </citation>
    <scope>NUCLEOTIDE SEQUENCE [LARGE SCALE GENOMIC DNA]</scope>
    <source>
        <strain>B-3501A</strain>
    </source>
</reference>
<name>CG121_CRYNB</name>
<dbReference type="EMBL" id="AAEY01000013">
    <property type="protein sequence ID" value="EAL21904.1"/>
    <property type="molecule type" value="Genomic_DNA"/>
</dbReference>
<dbReference type="RefSeq" id="XP_776551.1">
    <property type="nucleotide sequence ID" value="XM_771458.1"/>
</dbReference>
<dbReference type="SMR" id="P0CM65"/>
<dbReference type="EnsemblFungi" id="AAW42616">
    <property type="protein sequence ID" value="AAW42616"/>
    <property type="gene ID" value="CNC06740"/>
</dbReference>
<dbReference type="GeneID" id="4934709"/>
<dbReference type="KEGG" id="cnb:CNBC0450"/>
<dbReference type="VEuPathDB" id="FungiDB:CNBC0450"/>
<dbReference type="HOGENOM" id="CLU_065847_1_2_1"/>
<dbReference type="OrthoDB" id="9527at5206"/>
<dbReference type="GO" id="GO:0000781">
    <property type="term" value="C:chromosome, telomeric region"/>
    <property type="evidence" value="ECO:0007669"/>
    <property type="project" value="UniProtKB-SubCell"/>
</dbReference>
<dbReference type="GO" id="GO:0005829">
    <property type="term" value="C:cytosol"/>
    <property type="evidence" value="ECO:0007669"/>
    <property type="project" value="TreeGrafter"/>
</dbReference>
<dbReference type="GO" id="GO:0000408">
    <property type="term" value="C:EKC/KEOPS complex"/>
    <property type="evidence" value="ECO:0007669"/>
    <property type="project" value="TreeGrafter"/>
</dbReference>
<dbReference type="GO" id="GO:0005634">
    <property type="term" value="C:nucleus"/>
    <property type="evidence" value="ECO:0007669"/>
    <property type="project" value="UniProtKB-SubCell"/>
</dbReference>
<dbReference type="GO" id="GO:0002949">
    <property type="term" value="P:tRNA threonylcarbamoyladenosine modification"/>
    <property type="evidence" value="ECO:0007669"/>
    <property type="project" value="TreeGrafter"/>
</dbReference>
<dbReference type="Gene3D" id="3.30.2380.10">
    <property type="entry name" value="CGI121/TPRKB"/>
    <property type="match status" value="1"/>
</dbReference>
<dbReference type="InterPro" id="IPR013926">
    <property type="entry name" value="CGI121/TPRKB"/>
</dbReference>
<dbReference type="InterPro" id="IPR036504">
    <property type="entry name" value="CGI121/TPRKB_sf"/>
</dbReference>
<dbReference type="PANTHER" id="PTHR15840">
    <property type="entry name" value="CGI-121 FAMILY MEMBER"/>
    <property type="match status" value="1"/>
</dbReference>
<dbReference type="PANTHER" id="PTHR15840:SF10">
    <property type="entry name" value="EKC_KEOPS COMPLEX SUBUNIT TPRKB"/>
    <property type="match status" value="1"/>
</dbReference>
<dbReference type="Pfam" id="PF08617">
    <property type="entry name" value="CGI-121"/>
    <property type="match status" value="1"/>
</dbReference>
<dbReference type="SUPFAM" id="SSF143870">
    <property type="entry name" value="PF0523-like"/>
    <property type="match status" value="1"/>
</dbReference>
<proteinExistence type="inferred from homology"/>
<keyword id="KW-0010">Activator</keyword>
<keyword id="KW-0158">Chromosome</keyword>
<keyword id="KW-0539">Nucleus</keyword>
<keyword id="KW-0779">Telomere</keyword>
<keyword id="KW-0804">Transcription</keyword>
<keyword id="KW-0805">Transcription regulation</keyword>
<keyword id="KW-0819">tRNA processing</keyword>
<protein>
    <recommendedName>
        <fullName>EKC/KEOPS complex subunit CGI121</fullName>
    </recommendedName>
</protein>
<feature type="chain" id="PRO_0000410035" description="EKC/KEOPS complex subunit CGI121">
    <location>
        <begin position="1"/>
        <end position="229"/>
    </location>
</feature>
<feature type="region of interest" description="Disordered" evidence="2">
    <location>
        <begin position="87"/>
        <end position="120"/>
    </location>
</feature>